<comment type="function">
    <text evidence="4 5">High-affinity sucrose transporter. Responsible for the transport of sucrose into the cell, with the concomitant uptake of protons (symport system). Can also transport a wide range of glucosides, such as helicin, salicin, arbutin, maltose, fraxin, esculin, uranose, alpha-methylglucoside, alpha-phenylglucoside and beta-phenylglucoside. Plays a role in flowering time transition delay.</text>
</comment>
<comment type="catalytic activity">
    <reaction evidence="4 5">
        <text>sucrose(out) + H(+)(out) = sucrose(in) + H(+)(in)</text>
        <dbReference type="Rhea" id="RHEA:72187"/>
        <dbReference type="ChEBI" id="CHEBI:15378"/>
        <dbReference type="ChEBI" id="CHEBI:17992"/>
    </reaction>
    <physiologicalReaction direction="left-to-right" evidence="4 5">
        <dbReference type="Rhea" id="RHEA:72188"/>
    </physiologicalReaction>
</comment>
<comment type="activity regulation">
    <text evidence="4">Inhibited by protonophores (e.g. carbonyl cyanide m-chlorophenyl-hydrazone (CCCP)) and SH group inhibitors (e.g. p-chloromercuribenzene sulphonic acid (PCMBS)).</text>
</comment>
<comment type="biophysicochemical properties">
    <kinetics>
        <KM evidence="4 5">66 uM for sucrose (at pH 5.0)</KM>
        <KM evidence="4 5">150 uM for salicin (at pH 5.0)</KM>
        <KM evidence="4 5">560 uM for arbutin (at pH 5.0)</KM>
    </kinetics>
</comment>
<comment type="pathway">
    <text>Glycan biosynthesis; sucrose metabolism.</text>
</comment>
<comment type="subcellular location">
    <subcellularLocation>
        <location evidence="5">Cell membrane</location>
        <topology evidence="5">Multi-pass membrane protein</topology>
    </subcellularLocation>
</comment>
<comment type="tissue specificity">
    <text evidence="4 5">Widely expressed.</text>
</comment>
<comment type="disruption phenotype">
    <text evidence="5">Early flowering phenotype under short-day conditions.</text>
</comment>
<comment type="similarity">
    <text evidence="7">Belongs to the glycoside-pentoside-hexuronide (GPH) cation symporter transporter (TC 2.A.2.4) family.</text>
</comment>
<protein>
    <recommendedName>
        <fullName evidence="6">Sucrose transport protein SUC9</fullName>
        <shortName evidence="6">AtSUC9</shortName>
    </recommendedName>
    <alternativeName>
        <fullName>Sucrose permease 9</fullName>
    </alternativeName>
    <alternativeName>
        <fullName evidence="6">Sucrose-proton symporter 9</fullName>
    </alternativeName>
</protein>
<name>SUC9_ARATH</name>
<sequence length="491" mass="52578">MSDIQAKEDAAPVDRQSSSSVVVPDEPSPLRKMISVASIAAGIQFGWALQLSLLTPYVQLLGVPHKWSSFIWLCGPISGLLVQPTVGYFSDRCKSRFGRRRPFIATGALLVALAVILIGFAADFGHTMGDKLDEAVKIRAVGFFVVGFWILDVANNTLQGPCRAFLGDLAAGDAKKTRTANAIFSFFMAVGNVLGYAAGSYTNLHKIFPFTVTKACDIYCANLKSCFIISITLLIVLTIIALWYVEDKQWSPNADSDNEKTPFFGEIFGAFKVMKRPMWMLLAVTALNWIAWFPFLLYDTDWMGREVYGGDSAGDDKMKKLYNHGIQVGSLGLMLNSIVLGVMSLVIGVISKKIGAKRLWGAVNIILAVCLAMTVLVTKKAEEHRKIAGRMALPTNAIRDGALSLFAILGIPLAITFSIPFALASIISSSSGAGQGLSLGVLNMAIVIPQMIVSFGVGPIDALFGGGNLPGFVVGAIAALISSVVALTVLP</sequence>
<dbReference type="EMBL" id="AP002544">
    <property type="protein sequence ID" value="BAB09682.1"/>
    <property type="molecule type" value="Genomic_DNA"/>
</dbReference>
<dbReference type="EMBL" id="CP002688">
    <property type="protein sequence ID" value="AED90978.1"/>
    <property type="molecule type" value="Genomic_DNA"/>
</dbReference>
<dbReference type="RefSeq" id="NP_196235.1">
    <property type="nucleotide sequence ID" value="NM_120699.1"/>
</dbReference>
<dbReference type="SMR" id="Q9FG00"/>
<dbReference type="BioGRID" id="15783">
    <property type="interactions" value="6"/>
</dbReference>
<dbReference type="FunCoup" id="Q9FG00">
    <property type="interactions" value="821"/>
</dbReference>
<dbReference type="IntAct" id="Q9FG00">
    <property type="interactions" value="1"/>
</dbReference>
<dbReference type="STRING" id="3702.Q9FG00"/>
<dbReference type="GlyGen" id="Q9FG00">
    <property type="glycosylation" value="1 site"/>
</dbReference>
<dbReference type="iPTMnet" id="Q9FG00"/>
<dbReference type="PaxDb" id="3702-AT5G06170.1"/>
<dbReference type="ProteomicsDB" id="245355"/>
<dbReference type="EnsemblPlants" id="AT5G06170.1">
    <property type="protein sequence ID" value="AT5G06170.1"/>
    <property type="gene ID" value="AT5G06170"/>
</dbReference>
<dbReference type="GeneID" id="830504"/>
<dbReference type="Gramene" id="AT5G06170.1">
    <property type="protein sequence ID" value="AT5G06170.1"/>
    <property type="gene ID" value="AT5G06170"/>
</dbReference>
<dbReference type="KEGG" id="ath:AT5G06170"/>
<dbReference type="Araport" id="AT5G06170"/>
<dbReference type="TAIR" id="AT5G06170">
    <property type="gene designation" value="SUC9"/>
</dbReference>
<dbReference type="eggNOG" id="KOG0637">
    <property type="taxonomic scope" value="Eukaryota"/>
</dbReference>
<dbReference type="HOGENOM" id="CLU_025234_3_0_1"/>
<dbReference type="InParanoid" id="Q9FG00"/>
<dbReference type="OMA" id="LPNPKNH"/>
<dbReference type="OrthoDB" id="28755at2759"/>
<dbReference type="PhylomeDB" id="Q9FG00"/>
<dbReference type="UniPathway" id="UPA00238"/>
<dbReference type="PRO" id="PR:Q9FG00"/>
<dbReference type="Proteomes" id="UP000006548">
    <property type="component" value="Chromosome 5"/>
</dbReference>
<dbReference type="ExpressionAtlas" id="Q9FG00">
    <property type="expression patterns" value="baseline and differential"/>
</dbReference>
<dbReference type="GO" id="GO:0005886">
    <property type="term" value="C:plasma membrane"/>
    <property type="evidence" value="ECO:0000314"/>
    <property type="project" value="TAIR"/>
</dbReference>
<dbReference type="GO" id="GO:0042951">
    <property type="term" value="F:arbutin transmembrane transporter activity"/>
    <property type="evidence" value="ECO:0000314"/>
    <property type="project" value="UniProtKB"/>
</dbReference>
<dbReference type="GO" id="GO:0005364">
    <property type="term" value="F:maltose:proton symporter activity"/>
    <property type="evidence" value="ECO:0000314"/>
    <property type="project" value="UniProtKB"/>
</dbReference>
<dbReference type="GO" id="GO:0042950">
    <property type="term" value="F:salicin transmembrane transporter activity"/>
    <property type="evidence" value="ECO:0000314"/>
    <property type="project" value="UniProtKB"/>
</dbReference>
<dbReference type="GO" id="GO:0008515">
    <property type="term" value="F:sucrose transmembrane transporter activity"/>
    <property type="evidence" value="ECO:0000314"/>
    <property type="project" value="TAIR"/>
</dbReference>
<dbReference type="GO" id="GO:0051119">
    <property type="term" value="F:sugar transmembrane transporter activity"/>
    <property type="evidence" value="ECO:0000314"/>
    <property type="project" value="TAIR"/>
</dbReference>
<dbReference type="GO" id="GO:0009908">
    <property type="term" value="P:flower development"/>
    <property type="evidence" value="ECO:0000315"/>
    <property type="project" value="TAIR"/>
</dbReference>
<dbReference type="GO" id="GO:0042946">
    <property type="term" value="P:glucoside transport"/>
    <property type="evidence" value="ECO:0000314"/>
    <property type="project" value="TAIR"/>
</dbReference>
<dbReference type="GO" id="GO:0015768">
    <property type="term" value="P:maltose transport"/>
    <property type="evidence" value="ECO:0000314"/>
    <property type="project" value="UniProtKB"/>
</dbReference>
<dbReference type="GO" id="GO:0009909">
    <property type="term" value="P:regulation of flower development"/>
    <property type="evidence" value="ECO:0000315"/>
    <property type="project" value="TAIR"/>
</dbReference>
<dbReference type="GO" id="GO:0005985">
    <property type="term" value="P:sucrose metabolic process"/>
    <property type="evidence" value="ECO:0007669"/>
    <property type="project" value="UniProtKB-UniPathway"/>
</dbReference>
<dbReference type="CDD" id="cd17313">
    <property type="entry name" value="MFS_SLC45_SUC"/>
    <property type="match status" value="1"/>
</dbReference>
<dbReference type="FunFam" id="1.20.1250.20:FF:000174">
    <property type="entry name" value="Sucrose transport protein"/>
    <property type="match status" value="1"/>
</dbReference>
<dbReference type="Gene3D" id="1.20.1250.20">
    <property type="entry name" value="MFS general substrate transporter like domains"/>
    <property type="match status" value="1"/>
</dbReference>
<dbReference type="InterPro" id="IPR011701">
    <property type="entry name" value="MFS"/>
</dbReference>
<dbReference type="InterPro" id="IPR036259">
    <property type="entry name" value="MFS_trans_sf"/>
</dbReference>
<dbReference type="InterPro" id="IPR005989">
    <property type="entry name" value="Suc_symporter_pln"/>
</dbReference>
<dbReference type="NCBIfam" id="TIGR01301">
    <property type="entry name" value="GPH_sucrose"/>
    <property type="match status" value="1"/>
</dbReference>
<dbReference type="PANTHER" id="PTHR19432:SF94">
    <property type="entry name" value="SUCROSE TRANSPORT PROTEIN SUC7-RELATED"/>
    <property type="match status" value="1"/>
</dbReference>
<dbReference type="PANTHER" id="PTHR19432">
    <property type="entry name" value="SUGAR TRANSPORTER"/>
    <property type="match status" value="1"/>
</dbReference>
<dbReference type="Pfam" id="PF07690">
    <property type="entry name" value="MFS_1"/>
    <property type="match status" value="1"/>
</dbReference>
<dbReference type="SUPFAM" id="SSF103473">
    <property type="entry name" value="MFS general substrate transporter"/>
    <property type="match status" value="1"/>
</dbReference>
<accession>Q9FG00</accession>
<feature type="chain" id="PRO_0000122530" description="Sucrose transport protein SUC9">
    <location>
        <begin position="1"/>
        <end position="491"/>
    </location>
</feature>
<feature type="topological domain" description="Cytoplasmic" evidence="2">
    <location>
        <begin position="1"/>
        <end position="33"/>
    </location>
</feature>
<feature type="transmembrane region" description="Helical" evidence="2">
    <location>
        <begin position="34"/>
        <end position="54"/>
    </location>
</feature>
<feature type="topological domain" description="Extracellular" evidence="2">
    <location>
        <begin position="55"/>
        <end position="68"/>
    </location>
</feature>
<feature type="transmembrane region" description="Helical" evidence="2">
    <location>
        <begin position="69"/>
        <end position="89"/>
    </location>
</feature>
<feature type="topological domain" description="Cytoplasmic" evidence="2">
    <location>
        <begin position="90"/>
        <end position="101"/>
    </location>
</feature>
<feature type="transmembrane region" description="Helical" evidence="2">
    <location>
        <begin position="102"/>
        <end position="122"/>
    </location>
</feature>
<feature type="topological domain" description="Extracellular" evidence="2">
    <location>
        <begin position="123"/>
        <end position="139"/>
    </location>
</feature>
<feature type="transmembrane region" description="Helical" evidence="2">
    <location>
        <begin position="140"/>
        <end position="160"/>
    </location>
</feature>
<feature type="topological domain" description="Cytoplasmic" evidence="2">
    <location>
        <begin position="161"/>
        <end position="181"/>
    </location>
</feature>
<feature type="transmembrane region" description="Helical" evidence="2">
    <location>
        <begin position="182"/>
        <end position="202"/>
    </location>
</feature>
<feature type="topological domain" description="Extracellular" evidence="2">
    <location>
        <begin position="203"/>
        <end position="224"/>
    </location>
</feature>
<feature type="transmembrane region" description="Helical" evidence="2">
    <location>
        <begin position="225"/>
        <end position="245"/>
    </location>
</feature>
<feature type="topological domain" description="Cytoplasmic" evidence="2">
    <location>
        <begin position="246"/>
        <end position="277"/>
    </location>
</feature>
<feature type="transmembrane region" description="Helical" evidence="2">
    <location>
        <begin position="278"/>
        <end position="298"/>
    </location>
</feature>
<feature type="topological domain" description="Extracellular" evidence="2">
    <location>
        <begin position="299"/>
        <end position="329"/>
    </location>
</feature>
<feature type="transmembrane region" description="Helical" evidence="2">
    <location>
        <begin position="330"/>
        <end position="350"/>
    </location>
</feature>
<feature type="topological domain" description="Cytoplasmic" evidence="2">
    <location>
        <begin position="351"/>
        <end position="358"/>
    </location>
</feature>
<feature type="transmembrane region" description="Helical" evidence="2">
    <location>
        <begin position="359"/>
        <end position="379"/>
    </location>
</feature>
<feature type="topological domain" description="Extracellular" evidence="2">
    <location>
        <begin position="380"/>
        <end position="406"/>
    </location>
</feature>
<feature type="transmembrane region" description="Helical" evidence="2">
    <location>
        <begin position="407"/>
        <end position="427"/>
    </location>
</feature>
<feature type="topological domain" description="Cytoplasmic" evidence="2">
    <location>
        <begin position="428"/>
        <end position="443"/>
    </location>
</feature>
<feature type="transmembrane region" description="Helical" evidence="2">
    <location>
        <begin position="444"/>
        <end position="464"/>
    </location>
</feature>
<feature type="topological domain" description="Extracellular" evidence="2">
    <location>
        <begin position="465"/>
        <end position="468"/>
    </location>
</feature>
<feature type="transmembrane region" description="Helical" evidence="2">
    <location>
        <begin position="469"/>
        <end position="489"/>
    </location>
</feature>
<feature type="topological domain" description="Cytoplasmic" evidence="2">
    <location>
        <begin position="490"/>
        <end position="491"/>
    </location>
</feature>
<feature type="region of interest" description="Disordered" evidence="3">
    <location>
        <begin position="1"/>
        <end position="26"/>
    </location>
</feature>
<feature type="compositionally biased region" description="Basic and acidic residues" evidence="3">
    <location>
        <begin position="1"/>
        <end position="12"/>
    </location>
</feature>
<feature type="modified residue" description="Phosphoserine" evidence="1">
    <location>
        <position position="17"/>
    </location>
</feature>
<keyword id="KW-1003">Cell membrane</keyword>
<keyword id="KW-0472">Membrane</keyword>
<keyword id="KW-0597">Phosphoprotein</keyword>
<keyword id="KW-1185">Reference proteome</keyword>
<keyword id="KW-0762">Sugar transport</keyword>
<keyword id="KW-0769">Symport</keyword>
<keyword id="KW-0812">Transmembrane</keyword>
<keyword id="KW-1133">Transmembrane helix</keyword>
<keyword id="KW-0813">Transport</keyword>
<proteinExistence type="evidence at protein level"/>
<evidence type="ECO:0000250" key="1">
    <source>
        <dbReference type="UniProtKB" id="Q39232"/>
    </source>
</evidence>
<evidence type="ECO:0000255" key="2"/>
<evidence type="ECO:0000256" key="3">
    <source>
        <dbReference type="SAM" id="MobiDB-lite"/>
    </source>
</evidence>
<evidence type="ECO:0000269" key="4">
    <source>
    </source>
</evidence>
<evidence type="ECO:0000269" key="5">
    <source>
    </source>
</evidence>
<evidence type="ECO:0000303" key="6">
    <source>
    </source>
</evidence>
<evidence type="ECO:0000305" key="7"/>
<evidence type="ECO:0000312" key="8">
    <source>
        <dbReference type="Araport" id="AT5G06170"/>
    </source>
</evidence>
<evidence type="ECO:0000312" key="9">
    <source>
        <dbReference type="EMBL" id="BAB09682.1"/>
    </source>
</evidence>
<gene>
    <name evidence="6" type="primary">SUC9</name>
    <name evidence="8" type="ordered locus">At5g06170</name>
    <name evidence="9" type="ORF">MBL20.5</name>
</gene>
<organism>
    <name type="scientific">Arabidopsis thaliana</name>
    <name type="common">Mouse-ear cress</name>
    <dbReference type="NCBI Taxonomy" id="3702"/>
    <lineage>
        <taxon>Eukaryota</taxon>
        <taxon>Viridiplantae</taxon>
        <taxon>Streptophyta</taxon>
        <taxon>Embryophyta</taxon>
        <taxon>Tracheophyta</taxon>
        <taxon>Spermatophyta</taxon>
        <taxon>Magnoliopsida</taxon>
        <taxon>eudicotyledons</taxon>
        <taxon>Gunneridae</taxon>
        <taxon>Pentapetalae</taxon>
        <taxon>rosids</taxon>
        <taxon>malvids</taxon>
        <taxon>Brassicales</taxon>
        <taxon>Brassicaceae</taxon>
        <taxon>Camelineae</taxon>
        <taxon>Arabidopsis</taxon>
    </lineage>
</organism>
<reference key="1">
    <citation type="submission" date="2000-06" db="EMBL/GenBank/DDBJ databases">
        <title>Structural analysis of Arabidopsis thaliana chromosome 5. XI.</title>
        <authorList>
            <person name="Kaneko T."/>
            <person name="Katoh T."/>
            <person name="Asamizu E."/>
            <person name="Sato S."/>
            <person name="Nakamura Y."/>
            <person name="Kotani H."/>
            <person name="Tabata S."/>
        </authorList>
    </citation>
    <scope>NUCLEOTIDE SEQUENCE [LARGE SCALE GENOMIC DNA]</scope>
    <source>
        <strain>cv. Columbia</strain>
    </source>
</reference>
<reference key="2">
    <citation type="journal article" date="2017" name="Plant J.">
        <title>Araport11: a complete reannotation of the Arabidopsis thaliana reference genome.</title>
        <authorList>
            <person name="Cheng C.Y."/>
            <person name="Krishnakumar V."/>
            <person name="Chan A.P."/>
            <person name="Thibaud-Nissen F."/>
            <person name="Schobel S."/>
            <person name="Town C.D."/>
        </authorList>
    </citation>
    <scope>GENOME REANNOTATION</scope>
    <source>
        <strain>cv. Columbia</strain>
    </source>
</reference>
<reference key="3">
    <citation type="journal article" date="2004" name="Plant J.">
        <title>AtSUC8 and AtSUC9 encode functional sucrose transporters, but the closely related AtSUC6 and AtSUC7 genes encode aberrant proteins in different Arabidopsis ecotypes.</title>
        <authorList>
            <person name="Sauer N."/>
            <person name="Ludwig A."/>
            <person name="Knoblauch A."/>
            <person name="Rothe P."/>
            <person name="Gahrtz M."/>
            <person name="Klebl F."/>
        </authorList>
    </citation>
    <scope>FUNCTION</scope>
    <scope>BIOPHYSICOCHEMICAL PROPERTIES</scope>
    <scope>TISSUE SPECIFICITY</scope>
    <scope>ACTIVITY REGULATION</scope>
    <scope>TRANSPORTER ACTIVITY</scope>
</reference>
<reference key="4">
    <citation type="journal article" date="2007" name="Plant Physiol.">
        <title>Arabidopsis sucrose transporter AtSUC9. High-affinity transport activity, intragenic control of expression, and early flowering mutant phenotype.</title>
        <authorList>
            <person name="Sivitz A.B."/>
            <person name="Reinders A."/>
            <person name="Johnson M.E."/>
            <person name="Krentz A.D."/>
            <person name="Grof C.P."/>
            <person name="Perroux J.M."/>
            <person name="Ward J.M."/>
        </authorList>
    </citation>
    <scope>FUNCTION</scope>
    <scope>BIOPHYSICOCHEMICAL PROPERTIES</scope>
    <scope>SUBCELLULAR LOCATION</scope>
    <scope>TISSUE SPECIFICITY</scope>
    <scope>DISRUPTION PHENOTYPE</scope>
    <scope>TRANSPORTER ACTIVITY</scope>
</reference>